<feature type="chain" id="PRO_0000046267" description="Plasma membrane ATPase">
    <location>
        <begin position="1"/>
        <end position="899"/>
    </location>
</feature>
<feature type="topological domain" description="Cytoplasmic" evidence="2">
    <location>
        <begin position="1"/>
        <end position="96"/>
    </location>
</feature>
<feature type="transmembrane region" description="Helical; Name=1" evidence="2">
    <location>
        <begin position="97"/>
        <end position="117"/>
    </location>
</feature>
<feature type="topological domain" description="Extracellular" evidence="2">
    <location>
        <begin position="118"/>
        <end position="121"/>
    </location>
</feature>
<feature type="transmembrane region" description="Helical; Name=2" evidence="2">
    <location>
        <begin position="122"/>
        <end position="141"/>
    </location>
</feature>
<feature type="topological domain" description="Cytoplasmic" evidence="2">
    <location>
        <begin position="142"/>
        <end position="272"/>
    </location>
</feature>
<feature type="transmembrane region" description="Helical; Name=3" evidence="2">
    <location>
        <begin position="273"/>
        <end position="294"/>
    </location>
</feature>
<feature type="topological domain" description="Extracellular" evidence="2">
    <location>
        <begin position="295"/>
        <end position="305"/>
    </location>
</feature>
<feature type="transmembrane region" description="Helical; Name=4" evidence="2">
    <location>
        <begin position="306"/>
        <end position="328"/>
    </location>
</feature>
<feature type="topological domain" description="Cytoplasmic" evidence="2">
    <location>
        <begin position="329"/>
        <end position="700"/>
    </location>
</feature>
<feature type="transmembrane region" description="Helical; Name=5" evidence="2">
    <location>
        <begin position="701"/>
        <end position="719"/>
    </location>
</feature>
<feature type="topological domain" description="Extracellular" evidence="2">
    <location>
        <begin position="720"/>
        <end position="735"/>
    </location>
</feature>
<feature type="transmembrane region" description="Helical; Name=6" evidence="2">
    <location>
        <begin position="736"/>
        <end position="755"/>
    </location>
</feature>
<feature type="topological domain" description="Cytoplasmic" evidence="2">
    <location>
        <begin position="756"/>
        <end position="805"/>
    </location>
</feature>
<feature type="transmembrane region" description="Helical; Name=7" evidence="2">
    <location>
        <begin position="806"/>
        <end position="826"/>
    </location>
</feature>
<feature type="topological domain" description="Extracellular" evidence="2">
    <location>
        <begin position="827"/>
        <end position="838"/>
    </location>
</feature>
<feature type="transmembrane region" description="Helical; Name=8" evidence="2">
    <location>
        <begin position="839"/>
        <end position="855"/>
    </location>
</feature>
<feature type="topological domain" description="Cytoplasmic" evidence="2">
    <location>
        <begin position="856"/>
        <end position="899"/>
    </location>
</feature>
<feature type="region of interest" description="Disordered" evidence="3">
    <location>
        <begin position="1"/>
        <end position="72"/>
    </location>
</feature>
<feature type="compositionally biased region" description="Acidic residues" evidence="3">
    <location>
        <begin position="17"/>
        <end position="29"/>
    </location>
</feature>
<feature type="active site" description="4-aspartylphosphate intermediate" evidence="1">
    <location>
        <position position="359"/>
    </location>
</feature>
<feature type="binding site" evidence="1">
    <location>
        <position position="615"/>
    </location>
    <ligand>
        <name>Mg(2+)</name>
        <dbReference type="ChEBI" id="CHEBI:18420"/>
    </ligand>
</feature>
<feature type="binding site" evidence="1">
    <location>
        <position position="619"/>
    </location>
    <ligand>
        <name>Mg(2+)</name>
        <dbReference type="ChEBI" id="CHEBI:18420"/>
    </ligand>
</feature>
<feature type="mutagenesis site" description="In 3.3; low capacity to pump out protons." evidence="4">
    <original>M</original>
    <variation>I</variation>
    <location>
        <position position="669"/>
    </location>
</feature>
<keyword id="KW-0067">ATP-binding</keyword>
<keyword id="KW-1003">Cell membrane</keyword>
<keyword id="KW-0375">Hydrogen ion transport</keyword>
<keyword id="KW-0406">Ion transport</keyword>
<keyword id="KW-0460">Magnesium</keyword>
<keyword id="KW-0472">Membrane</keyword>
<keyword id="KW-0479">Metal-binding</keyword>
<keyword id="KW-0547">Nucleotide-binding</keyword>
<keyword id="KW-0597">Phosphoprotein</keyword>
<keyword id="KW-1185">Reference proteome</keyword>
<keyword id="KW-1278">Translocase</keyword>
<keyword id="KW-0812">Transmembrane</keyword>
<keyword id="KW-1133">Transmembrane helix</keyword>
<keyword id="KW-0813">Transport</keyword>
<protein>
    <recommendedName>
        <fullName>Plasma membrane ATPase</fullName>
        <ecNumber>7.1.2.1</ecNumber>
    </recommendedName>
    <alternativeName>
        <fullName>Proton pump</fullName>
    </alternativeName>
</protein>
<gene>
    <name type="primary">PMA1</name>
    <name type="ordered locus">KLLA0A09031g</name>
</gene>
<proteinExistence type="evidence at protein level"/>
<sequence>MSAATEPTKEKPVNNQDSDDEDEDIDQLIEDLQSHHGLDDESEDDEHVAAGSARPVPEELLQTDPSYGLTSDEVTKRRKKYGLNQMSEETENLFVKFLMFFIGPIQFVMEAAAILAAGLEDWVDFGVICGLLFLNAAVGFIQEYQAGSIVDELKKTLANSAVVIRDGNLVEVPSNEVVPGDILQLEDGVVIPADGRLVTEDCFIQIDQSAITGESLAVDKRFGDSTFSSSTVKRGEAFMIVTATGDSTFVGRAAALVNKAAAGSGHFTEVLNGIGTILLILVIVTLLLVWVASFYRTNKIVRILRYTLAITIVGVPVGLPAVVTTTMAVGAAYLAKKQAIVQKLSAIESLAGVEILCSDKTGTLTKNKLSLHEPYTVEGVDPDDLMLTACLAASRKKKGLDAIDKAFLKSLISYPRAKAALTKYKLLEFHPFDPVSKKVTAIVESPEGERIICVKGAPLFVLKTVEEEHPIPEDVRENYENKVAELASRGFRALGVARKRGEGHWEILGVMPCMDPPRDDTAQTVNEARHLGLRVKMLTGDAVGIAKETCRQLGLGTNIYNAERLGLGGGGDMPGSELADFVENADGFAEVFPQHKYNVVEILQQRGYLVAMTGDGVNDAPSLKKADTGIAVEGATDAARSAADIVFLAPGLSAIIDALKTSRQIFHRMYSYVVYRIALSLHLEIFLGLWIAILNRSLNIDLVVFIAIFADVATLAIAYDNAPYSPKPVKWNLRRLWGMSVILGIILAIGTWITLTTMFVPKGGIIQNFGSIDGVLFLQISLTENWLIFITRAAGPFWSSIPSWQLSGAVLIVDIIATMFCLFGWWSQNWNDIVTVVRVWIFSFGVFCVMGGAYYMMSESEAFDRFMNGKSRRDKPSGRSVEDFLMAMQRVSTQHEKEN</sequence>
<dbReference type="EC" id="7.1.2.1"/>
<dbReference type="EMBL" id="L37875">
    <property type="protein sequence ID" value="AAA69688.1"/>
    <property type="molecule type" value="Genomic_DNA"/>
</dbReference>
<dbReference type="EMBL" id="CR382121">
    <property type="protein sequence ID" value="CAH02983.1"/>
    <property type="molecule type" value="Genomic_DNA"/>
</dbReference>
<dbReference type="RefSeq" id="XP_451395.1">
    <property type="nucleotide sequence ID" value="XM_451395.1"/>
</dbReference>
<dbReference type="SMR" id="P49380"/>
<dbReference type="FunCoup" id="P49380">
    <property type="interactions" value="532"/>
</dbReference>
<dbReference type="STRING" id="284590.P49380"/>
<dbReference type="PaxDb" id="284590-P49380"/>
<dbReference type="KEGG" id="kla:KLLA0_A09031g"/>
<dbReference type="eggNOG" id="KOG0205">
    <property type="taxonomic scope" value="Eukaryota"/>
</dbReference>
<dbReference type="HOGENOM" id="CLU_002360_6_0_1"/>
<dbReference type="InParanoid" id="P49380"/>
<dbReference type="OMA" id="VIEFHPF"/>
<dbReference type="Proteomes" id="UP000000598">
    <property type="component" value="Chromosome A"/>
</dbReference>
<dbReference type="GO" id="GO:0005886">
    <property type="term" value="C:plasma membrane"/>
    <property type="evidence" value="ECO:0007669"/>
    <property type="project" value="UniProtKB-SubCell"/>
</dbReference>
<dbReference type="GO" id="GO:0005524">
    <property type="term" value="F:ATP binding"/>
    <property type="evidence" value="ECO:0007669"/>
    <property type="project" value="UniProtKB-KW"/>
</dbReference>
<dbReference type="GO" id="GO:0016887">
    <property type="term" value="F:ATP hydrolysis activity"/>
    <property type="evidence" value="ECO:0007669"/>
    <property type="project" value="InterPro"/>
</dbReference>
<dbReference type="GO" id="GO:0046872">
    <property type="term" value="F:metal ion binding"/>
    <property type="evidence" value="ECO:0007669"/>
    <property type="project" value="UniProtKB-KW"/>
</dbReference>
<dbReference type="GO" id="GO:0008553">
    <property type="term" value="F:P-type proton-exporting transporter activity"/>
    <property type="evidence" value="ECO:0007669"/>
    <property type="project" value="UniProtKB-EC"/>
</dbReference>
<dbReference type="GO" id="GO:0120029">
    <property type="term" value="P:proton export across plasma membrane"/>
    <property type="evidence" value="ECO:0007669"/>
    <property type="project" value="InterPro"/>
</dbReference>
<dbReference type="CDD" id="cd02076">
    <property type="entry name" value="P-type_ATPase_H"/>
    <property type="match status" value="1"/>
</dbReference>
<dbReference type="FunFam" id="2.70.150.10:FF:000011">
    <property type="entry name" value="Plasma membrane ATPase"/>
    <property type="match status" value="1"/>
</dbReference>
<dbReference type="FunFam" id="3.40.1110.10:FF:000005">
    <property type="entry name" value="Plasma membrane ATPase"/>
    <property type="match status" value="1"/>
</dbReference>
<dbReference type="FunFam" id="3.40.50.1000:FF:000008">
    <property type="entry name" value="Plasma membrane ATPase"/>
    <property type="match status" value="1"/>
</dbReference>
<dbReference type="Gene3D" id="3.40.1110.10">
    <property type="entry name" value="Calcium-transporting ATPase, cytoplasmic domain N"/>
    <property type="match status" value="1"/>
</dbReference>
<dbReference type="Gene3D" id="2.70.150.10">
    <property type="entry name" value="Calcium-transporting ATPase, cytoplasmic transduction domain A"/>
    <property type="match status" value="1"/>
</dbReference>
<dbReference type="Gene3D" id="1.20.1110.10">
    <property type="entry name" value="Calcium-transporting ATPase, transmembrane domain"/>
    <property type="match status" value="1"/>
</dbReference>
<dbReference type="Gene3D" id="3.40.50.1000">
    <property type="entry name" value="HAD superfamily/HAD-like"/>
    <property type="match status" value="1"/>
</dbReference>
<dbReference type="InterPro" id="IPR004014">
    <property type="entry name" value="ATPase_P-typ_cation-transptr_N"/>
</dbReference>
<dbReference type="InterPro" id="IPR023299">
    <property type="entry name" value="ATPase_P-typ_cyto_dom_N"/>
</dbReference>
<dbReference type="InterPro" id="IPR018303">
    <property type="entry name" value="ATPase_P-typ_P_site"/>
</dbReference>
<dbReference type="InterPro" id="IPR023298">
    <property type="entry name" value="ATPase_P-typ_TM_dom_sf"/>
</dbReference>
<dbReference type="InterPro" id="IPR008250">
    <property type="entry name" value="ATPase_P-typ_transduc_dom_A_sf"/>
</dbReference>
<dbReference type="InterPro" id="IPR036412">
    <property type="entry name" value="HAD-like_sf"/>
</dbReference>
<dbReference type="InterPro" id="IPR023214">
    <property type="entry name" value="HAD_sf"/>
</dbReference>
<dbReference type="InterPro" id="IPR006534">
    <property type="entry name" value="P-type_ATPase_IIIA"/>
</dbReference>
<dbReference type="InterPro" id="IPR001757">
    <property type="entry name" value="P_typ_ATPase"/>
</dbReference>
<dbReference type="InterPro" id="IPR044492">
    <property type="entry name" value="P_typ_ATPase_HD_dom"/>
</dbReference>
<dbReference type="NCBIfam" id="TIGR01647">
    <property type="entry name" value="ATPase-IIIA_H"/>
    <property type="match status" value="1"/>
</dbReference>
<dbReference type="NCBIfam" id="TIGR01494">
    <property type="entry name" value="ATPase_P-type"/>
    <property type="match status" value="3"/>
</dbReference>
<dbReference type="PANTHER" id="PTHR42861">
    <property type="entry name" value="CALCIUM-TRANSPORTING ATPASE"/>
    <property type="match status" value="1"/>
</dbReference>
<dbReference type="Pfam" id="PF00690">
    <property type="entry name" value="Cation_ATPase_N"/>
    <property type="match status" value="1"/>
</dbReference>
<dbReference type="Pfam" id="PF00122">
    <property type="entry name" value="E1-E2_ATPase"/>
    <property type="match status" value="1"/>
</dbReference>
<dbReference type="Pfam" id="PF00702">
    <property type="entry name" value="Hydrolase"/>
    <property type="match status" value="1"/>
</dbReference>
<dbReference type="PRINTS" id="PR00119">
    <property type="entry name" value="CATATPASE"/>
</dbReference>
<dbReference type="PRINTS" id="PR00120">
    <property type="entry name" value="HATPASE"/>
</dbReference>
<dbReference type="SFLD" id="SFLDG00002">
    <property type="entry name" value="C1.7:_P-type_atpase_like"/>
    <property type="match status" value="1"/>
</dbReference>
<dbReference type="SFLD" id="SFLDF00027">
    <property type="entry name" value="p-type_atpase"/>
    <property type="match status" value="1"/>
</dbReference>
<dbReference type="SMART" id="SM00831">
    <property type="entry name" value="Cation_ATPase_N"/>
    <property type="match status" value="1"/>
</dbReference>
<dbReference type="SUPFAM" id="SSF81653">
    <property type="entry name" value="Calcium ATPase, transduction domain A"/>
    <property type="match status" value="1"/>
</dbReference>
<dbReference type="SUPFAM" id="SSF81665">
    <property type="entry name" value="Calcium ATPase, transmembrane domain M"/>
    <property type="match status" value="1"/>
</dbReference>
<dbReference type="SUPFAM" id="SSF56784">
    <property type="entry name" value="HAD-like"/>
    <property type="match status" value="1"/>
</dbReference>
<dbReference type="PROSITE" id="PS00154">
    <property type="entry name" value="ATPASE_E1_E2"/>
    <property type="match status" value="1"/>
</dbReference>
<name>PMA1_KLULA</name>
<accession>P49380</accession>
<comment type="function">
    <text>The plasma membrane ATPase of plants and fungi is a hydrogen ion pump. The proton gradient it generates drives the active transport of nutrients by H(+)-symport. The resulting external acidification and/or internal alkinization may mediate growth responses.</text>
</comment>
<comment type="catalytic activity">
    <reaction>
        <text>ATP + H2O + H(+)(in) = ADP + phosphate + 2 H(+)(out)</text>
        <dbReference type="Rhea" id="RHEA:20852"/>
        <dbReference type="ChEBI" id="CHEBI:15377"/>
        <dbReference type="ChEBI" id="CHEBI:15378"/>
        <dbReference type="ChEBI" id="CHEBI:30616"/>
        <dbReference type="ChEBI" id="CHEBI:43474"/>
        <dbReference type="ChEBI" id="CHEBI:456216"/>
        <dbReference type="EC" id="7.1.2.1"/>
    </reaction>
</comment>
<comment type="activity regulation">
    <text>Activated by high pH or also by potassium ions when the medium pH is low.</text>
</comment>
<comment type="subcellular location">
    <subcellularLocation>
        <location>Cell membrane</location>
        <topology>Multi-pass membrane protein</topology>
    </subcellularLocation>
</comment>
<comment type="similarity">
    <text evidence="5">Belongs to the cation transport ATPase (P-type) (TC 3.A.3) family. Type IIIA subfamily.</text>
</comment>
<reference key="1">
    <citation type="journal article" date="1995" name="J. Bacteriol.">
        <title>Molecular cloning of the plasma membrane H(+)-ATPase from Kluyveromyces lactis: a single nucleotide substitution in the gene confers ethidium bromide resistance and deficiency in K+ uptake.</title>
        <authorList>
            <person name="Miranda M."/>
            <person name="Ramirez J."/>
            <person name="Pena A."/>
            <person name="Coria R."/>
        </authorList>
    </citation>
    <scope>NUCLEOTIDE SEQUENCE [GENOMIC DNA]</scope>
    <scope>MUTAGENESIS OF MET-669</scope>
    <source>
        <strain>ATCC 8585 / CBS 2359 / DSM 70799 / NBRC 1267 / NRRL Y-1140 / WM37</strain>
    </source>
</reference>
<reference key="2">
    <citation type="journal article" date="2004" name="Nature">
        <title>Genome evolution in yeasts.</title>
        <authorList>
            <person name="Dujon B."/>
            <person name="Sherman D."/>
            <person name="Fischer G."/>
            <person name="Durrens P."/>
            <person name="Casaregola S."/>
            <person name="Lafontaine I."/>
            <person name="de Montigny J."/>
            <person name="Marck C."/>
            <person name="Neuveglise C."/>
            <person name="Talla E."/>
            <person name="Goffard N."/>
            <person name="Frangeul L."/>
            <person name="Aigle M."/>
            <person name="Anthouard V."/>
            <person name="Babour A."/>
            <person name="Barbe V."/>
            <person name="Barnay S."/>
            <person name="Blanchin S."/>
            <person name="Beckerich J.-M."/>
            <person name="Beyne E."/>
            <person name="Bleykasten C."/>
            <person name="Boisrame A."/>
            <person name="Boyer J."/>
            <person name="Cattolico L."/>
            <person name="Confanioleri F."/>
            <person name="de Daruvar A."/>
            <person name="Despons L."/>
            <person name="Fabre E."/>
            <person name="Fairhead C."/>
            <person name="Ferry-Dumazet H."/>
            <person name="Groppi A."/>
            <person name="Hantraye F."/>
            <person name="Hennequin C."/>
            <person name="Jauniaux N."/>
            <person name="Joyet P."/>
            <person name="Kachouri R."/>
            <person name="Kerrest A."/>
            <person name="Koszul R."/>
            <person name="Lemaire M."/>
            <person name="Lesur I."/>
            <person name="Ma L."/>
            <person name="Muller H."/>
            <person name="Nicaud J.-M."/>
            <person name="Nikolski M."/>
            <person name="Oztas S."/>
            <person name="Ozier-Kalogeropoulos O."/>
            <person name="Pellenz S."/>
            <person name="Potier S."/>
            <person name="Richard G.-F."/>
            <person name="Straub M.-L."/>
            <person name="Suleau A."/>
            <person name="Swennen D."/>
            <person name="Tekaia F."/>
            <person name="Wesolowski-Louvel M."/>
            <person name="Westhof E."/>
            <person name="Wirth B."/>
            <person name="Zeniou-Meyer M."/>
            <person name="Zivanovic Y."/>
            <person name="Bolotin-Fukuhara M."/>
            <person name="Thierry A."/>
            <person name="Bouchier C."/>
            <person name="Caudron B."/>
            <person name="Scarpelli C."/>
            <person name="Gaillardin C."/>
            <person name="Weissenbach J."/>
            <person name="Wincker P."/>
            <person name="Souciet J.-L."/>
        </authorList>
    </citation>
    <scope>NUCLEOTIDE SEQUENCE [LARGE SCALE GENOMIC DNA]</scope>
    <source>
        <strain>ATCC 8585 / CBS 2359 / DSM 70799 / NBRC 1267 / NRRL Y-1140 / WM37</strain>
    </source>
</reference>
<evidence type="ECO:0000250" key="1"/>
<evidence type="ECO:0000255" key="2"/>
<evidence type="ECO:0000256" key="3">
    <source>
        <dbReference type="SAM" id="MobiDB-lite"/>
    </source>
</evidence>
<evidence type="ECO:0000269" key="4">
    <source>
    </source>
</evidence>
<evidence type="ECO:0000305" key="5"/>
<organism>
    <name type="scientific">Kluyveromyces lactis (strain ATCC 8585 / CBS 2359 / DSM 70799 / NBRC 1267 / NRRL Y-1140 / WM37)</name>
    <name type="common">Yeast</name>
    <name type="synonym">Candida sphaerica</name>
    <dbReference type="NCBI Taxonomy" id="284590"/>
    <lineage>
        <taxon>Eukaryota</taxon>
        <taxon>Fungi</taxon>
        <taxon>Dikarya</taxon>
        <taxon>Ascomycota</taxon>
        <taxon>Saccharomycotina</taxon>
        <taxon>Saccharomycetes</taxon>
        <taxon>Saccharomycetales</taxon>
        <taxon>Saccharomycetaceae</taxon>
        <taxon>Kluyveromyces</taxon>
    </lineage>
</organism>